<name>DEOC_STRSY</name>
<dbReference type="EC" id="4.1.2.4" evidence="1"/>
<dbReference type="EMBL" id="CP000407">
    <property type="protein sequence ID" value="ABP90051.1"/>
    <property type="molecule type" value="Genomic_DNA"/>
</dbReference>
<dbReference type="SMR" id="A4VVB2"/>
<dbReference type="STRING" id="391295.SSU05_1085"/>
<dbReference type="KEGG" id="ssu:SSU05_1085"/>
<dbReference type="eggNOG" id="COG0274">
    <property type="taxonomic scope" value="Bacteria"/>
</dbReference>
<dbReference type="HOGENOM" id="CLU_053595_0_1_9"/>
<dbReference type="UniPathway" id="UPA00002">
    <property type="reaction ID" value="UER00468"/>
</dbReference>
<dbReference type="GO" id="GO:0005737">
    <property type="term" value="C:cytoplasm"/>
    <property type="evidence" value="ECO:0007669"/>
    <property type="project" value="UniProtKB-SubCell"/>
</dbReference>
<dbReference type="GO" id="GO:0004139">
    <property type="term" value="F:deoxyribose-phosphate aldolase activity"/>
    <property type="evidence" value="ECO:0007669"/>
    <property type="project" value="UniProtKB-UniRule"/>
</dbReference>
<dbReference type="GO" id="GO:0006018">
    <property type="term" value="P:2-deoxyribose 1-phosphate catabolic process"/>
    <property type="evidence" value="ECO:0007669"/>
    <property type="project" value="UniProtKB-UniRule"/>
</dbReference>
<dbReference type="GO" id="GO:0016052">
    <property type="term" value="P:carbohydrate catabolic process"/>
    <property type="evidence" value="ECO:0007669"/>
    <property type="project" value="TreeGrafter"/>
</dbReference>
<dbReference type="GO" id="GO:0009264">
    <property type="term" value="P:deoxyribonucleotide catabolic process"/>
    <property type="evidence" value="ECO:0007669"/>
    <property type="project" value="InterPro"/>
</dbReference>
<dbReference type="CDD" id="cd00959">
    <property type="entry name" value="DeoC"/>
    <property type="match status" value="1"/>
</dbReference>
<dbReference type="FunFam" id="3.20.20.70:FF:000044">
    <property type="entry name" value="Deoxyribose-phosphate aldolase"/>
    <property type="match status" value="1"/>
</dbReference>
<dbReference type="Gene3D" id="3.20.20.70">
    <property type="entry name" value="Aldolase class I"/>
    <property type="match status" value="1"/>
</dbReference>
<dbReference type="HAMAP" id="MF_00114">
    <property type="entry name" value="DeoC_type1"/>
    <property type="match status" value="1"/>
</dbReference>
<dbReference type="InterPro" id="IPR013785">
    <property type="entry name" value="Aldolase_TIM"/>
</dbReference>
<dbReference type="InterPro" id="IPR011343">
    <property type="entry name" value="DeoC"/>
</dbReference>
<dbReference type="InterPro" id="IPR002915">
    <property type="entry name" value="DeoC/FbaB/LacD_aldolase"/>
</dbReference>
<dbReference type="InterPro" id="IPR028581">
    <property type="entry name" value="DeoC_typeI"/>
</dbReference>
<dbReference type="NCBIfam" id="TIGR00126">
    <property type="entry name" value="deoC"/>
    <property type="match status" value="1"/>
</dbReference>
<dbReference type="PANTHER" id="PTHR10889">
    <property type="entry name" value="DEOXYRIBOSE-PHOSPHATE ALDOLASE"/>
    <property type="match status" value="1"/>
</dbReference>
<dbReference type="PANTHER" id="PTHR10889:SF1">
    <property type="entry name" value="DEOXYRIBOSE-PHOSPHATE ALDOLASE"/>
    <property type="match status" value="1"/>
</dbReference>
<dbReference type="Pfam" id="PF01791">
    <property type="entry name" value="DeoC"/>
    <property type="match status" value="1"/>
</dbReference>
<dbReference type="PIRSF" id="PIRSF001357">
    <property type="entry name" value="DeoC"/>
    <property type="match status" value="1"/>
</dbReference>
<dbReference type="SMART" id="SM01133">
    <property type="entry name" value="DeoC"/>
    <property type="match status" value="1"/>
</dbReference>
<dbReference type="SUPFAM" id="SSF51569">
    <property type="entry name" value="Aldolase"/>
    <property type="match status" value="1"/>
</dbReference>
<feature type="chain" id="PRO_1000015338" description="Deoxyribose-phosphate aldolase">
    <location>
        <begin position="1"/>
        <end position="220"/>
    </location>
</feature>
<feature type="active site" description="Proton donor/acceptor" evidence="1">
    <location>
        <position position="89"/>
    </location>
</feature>
<feature type="active site" description="Schiff-base intermediate with acetaldehyde" evidence="1">
    <location>
        <position position="151"/>
    </location>
</feature>
<feature type="active site" description="Proton donor/acceptor" evidence="1">
    <location>
        <position position="180"/>
    </location>
</feature>
<organism>
    <name type="scientific">Streptococcus suis (strain 05ZYH33)</name>
    <dbReference type="NCBI Taxonomy" id="391295"/>
    <lineage>
        <taxon>Bacteria</taxon>
        <taxon>Bacillati</taxon>
        <taxon>Bacillota</taxon>
        <taxon>Bacilli</taxon>
        <taxon>Lactobacillales</taxon>
        <taxon>Streptococcaceae</taxon>
        <taxon>Streptococcus</taxon>
    </lineage>
</organism>
<gene>
    <name evidence="1" type="primary">deoC</name>
    <name type="ordered locus">SSU05_1085</name>
</gene>
<protein>
    <recommendedName>
        <fullName evidence="1">Deoxyribose-phosphate aldolase</fullName>
        <shortName evidence="1">DERA</shortName>
        <ecNumber evidence="1">4.1.2.4</ecNumber>
    </recommendedName>
    <alternativeName>
        <fullName evidence="1">2-deoxy-D-ribose 5-phosphate aldolase</fullName>
    </alternativeName>
    <alternativeName>
        <fullName evidence="1">Phosphodeoxyriboaldolase</fullName>
        <shortName evidence="1">Deoxyriboaldolase</shortName>
    </alternativeName>
</protein>
<keyword id="KW-0963">Cytoplasm</keyword>
<keyword id="KW-0456">Lyase</keyword>
<keyword id="KW-0704">Schiff base</keyword>
<reference key="1">
    <citation type="journal article" date="2007" name="PLoS ONE">
        <title>A glimpse of streptococcal toxic shock syndrome from comparative genomics of S. suis 2 Chinese isolates.</title>
        <authorList>
            <person name="Chen C."/>
            <person name="Tang J."/>
            <person name="Dong W."/>
            <person name="Wang C."/>
            <person name="Feng Y."/>
            <person name="Wang J."/>
            <person name="Zheng F."/>
            <person name="Pan X."/>
            <person name="Liu D."/>
            <person name="Li M."/>
            <person name="Song Y."/>
            <person name="Zhu X."/>
            <person name="Sun H."/>
            <person name="Feng T."/>
            <person name="Guo Z."/>
            <person name="Ju A."/>
            <person name="Ge J."/>
            <person name="Dong Y."/>
            <person name="Sun W."/>
            <person name="Jiang Y."/>
            <person name="Wang J."/>
            <person name="Yan J."/>
            <person name="Yang H."/>
            <person name="Wang X."/>
            <person name="Gao G.F."/>
            <person name="Yang R."/>
            <person name="Wang J."/>
            <person name="Yu J."/>
        </authorList>
    </citation>
    <scope>NUCLEOTIDE SEQUENCE [LARGE SCALE GENOMIC DNA]</scope>
    <source>
        <strain>05ZYH33</strain>
    </source>
</reference>
<evidence type="ECO:0000255" key="1">
    <source>
        <dbReference type="HAMAP-Rule" id="MF_00114"/>
    </source>
</evidence>
<sequence length="220" mass="22928">MKLNKYIDHTILKPETTQEQVEKILAEAKEYDFASVCVNPTWVALAAESLKDSDVKVCTVIGFPLGANTPAVKAFETKDAISNGADEIDVVINIGALKTGNYDLVLEDIKAVVAASGDKLVKVIIEACLLTDDEKVKGCQLSQEAGADYVKTSTGFSTGGATVADVALMRKTVGPDMGVKASGGARSYEDAIAFIEAGASRIGASSGVAIMNGAQADGDY</sequence>
<proteinExistence type="inferred from homology"/>
<accession>A4VVB2</accession>
<comment type="function">
    <text evidence="1">Catalyzes a reversible aldol reaction between acetaldehyde and D-glyceraldehyde 3-phosphate to generate 2-deoxy-D-ribose 5-phosphate.</text>
</comment>
<comment type="catalytic activity">
    <reaction evidence="1">
        <text>2-deoxy-D-ribose 5-phosphate = D-glyceraldehyde 3-phosphate + acetaldehyde</text>
        <dbReference type="Rhea" id="RHEA:12821"/>
        <dbReference type="ChEBI" id="CHEBI:15343"/>
        <dbReference type="ChEBI" id="CHEBI:59776"/>
        <dbReference type="ChEBI" id="CHEBI:62877"/>
        <dbReference type="EC" id="4.1.2.4"/>
    </reaction>
</comment>
<comment type="pathway">
    <text evidence="1">Carbohydrate degradation; 2-deoxy-D-ribose 1-phosphate degradation; D-glyceraldehyde 3-phosphate and acetaldehyde from 2-deoxy-alpha-D-ribose 1-phosphate: step 2/2.</text>
</comment>
<comment type="subcellular location">
    <subcellularLocation>
        <location evidence="1">Cytoplasm</location>
    </subcellularLocation>
</comment>
<comment type="similarity">
    <text evidence="1">Belongs to the DeoC/FbaB aldolase family. DeoC type 1 subfamily.</text>
</comment>